<proteinExistence type="inferred from homology"/>
<protein>
    <recommendedName>
        <fullName evidence="1">2-isopropylmalate synthase</fullName>
        <ecNumber evidence="1">2.3.3.13</ecNumber>
    </recommendedName>
    <alternativeName>
        <fullName evidence="1">Alpha-IPM synthase</fullName>
    </alternativeName>
    <alternativeName>
        <fullName evidence="1">Alpha-isopropylmalate synthase</fullName>
    </alternativeName>
</protein>
<name>LEU1_ECOLU</name>
<gene>
    <name evidence="1" type="primary">leuA</name>
    <name type="ordered locus">ECUMN_0076</name>
</gene>
<comment type="function">
    <text evidence="1">Catalyzes the condensation of the acetyl group of acetyl-CoA with 3-methyl-2-oxobutanoate (2-ketoisovalerate) to form 3-carboxy-3-hydroxy-4-methylpentanoate (2-isopropylmalate).</text>
</comment>
<comment type="catalytic activity">
    <reaction evidence="1">
        <text>3-methyl-2-oxobutanoate + acetyl-CoA + H2O = (2S)-2-isopropylmalate + CoA + H(+)</text>
        <dbReference type="Rhea" id="RHEA:21524"/>
        <dbReference type="ChEBI" id="CHEBI:1178"/>
        <dbReference type="ChEBI" id="CHEBI:11851"/>
        <dbReference type="ChEBI" id="CHEBI:15377"/>
        <dbReference type="ChEBI" id="CHEBI:15378"/>
        <dbReference type="ChEBI" id="CHEBI:57287"/>
        <dbReference type="ChEBI" id="CHEBI:57288"/>
        <dbReference type="EC" id="2.3.3.13"/>
    </reaction>
</comment>
<comment type="cofactor">
    <cofactor evidence="1">
        <name>Mn(2+)</name>
        <dbReference type="ChEBI" id="CHEBI:29035"/>
    </cofactor>
</comment>
<comment type="pathway">
    <text evidence="1">Amino-acid biosynthesis; L-leucine biosynthesis; L-leucine from 3-methyl-2-oxobutanoate: step 1/4.</text>
</comment>
<comment type="subunit">
    <text evidence="1">Homodimer.</text>
</comment>
<comment type="subcellular location">
    <subcellularLocation>
        <location evidence="1">Cytoplasm</location>
    </subcellularLocation>
</comment>
<comment type="similarity">
    <text evidence="1">Belongs to the alpha-IPM synthase/homocitrate synthase family. LeuA type 1 subfamily.</text>
</comment>
<accession>B7N7U9</accession>
<organism>
    <name type="scientific">Escherichia coli O17:K52:H18 (strain UMN026 / ExPEC)</name>
    <dbReference type="NCBI Taxonomy" id="585056"/>
    <lineage>
        <taxon>Bacteria</taxon>
        <taxon>Pseudomonadati</taxon>
        <taxon>Pseudomonadota</taxon>
        <taxon>Gammaproteobacteria</taxon>
        <taxon>Enterobacterales</taxon>
        <taxon>Enterobacteriaceae</taxon>
        <taxon>Escherichia</taxon>
    </lineage>
</organism>
<dbReference type="EC" id="2.3.3.13" evidence="1"/>
<dbReference type="EMBL" id="CU928163">
    <property type="protein sequence ID" value="CAR11299.1"/>
    <property type="molecule type" value="Genomic_DNA"/>
</dbReference>
<dbReference type="RefSeq" id="WP_000082847.1">
    <property type="nucleotide sequence ID" value="NC_011751.1"/>
</dbReference>
<dbReference type="RefSeq" id="YP_002410854.1">
    <property type="nucleotide sequence ID" value="NC_011751.1"/>
</dbReference>
<dbReference type="SMR" id="B7N7U9"/>
<dbReference type="STRING" id="585056.ECUMN_0076"/>
<dbReference type="GeneID" id="75169974"/>
<dbReference type="KEGG" id="eum:ECUMN_0076"/>
<dbReference type="PATRIC" id="fig|585056.7.peg.264"/>
<dbReference type="HOGENOM" id="CLU_022158_0_1_6"/>
<dbReference type="UniPathway" id="UPA00048">
    <property type="reaction ID" value="UER00070"/>
</dbReference>
<dbReference type="Proteomes" id="UP000007097">
    <property type="component" value="Chromosome"/>
</dbReference>
<dbReference type="GO" id="GO:0005829">
    <property type="term" value="C:cytosol"/>
    <property type="evidence" value="ECO:0007669"/>
    <property type="project" value="TreeGrafter"/>
</dbReference>
<dbReference type="GO" id="GO:0003852">
    <property type="term" value="F:2-isopropylmalate synthase activity"/>
    <property type="evidence" value="ECO:0007669"/>
    <property type="project" value="UniProtKB-UniRule"/>
</dbReference>
<dbReference type="GO" id="GO:0003985">
    <property type="term" value="F:acetyl-CoA C-acetyltransferase activity"/>
    <property type="evidence" value="ECO:0007669"/>
    <property type="project" value="UniProtKB-UniRule"/>
</dbReference>
<dbReference type="GO" id="GO:0030145">
    <property type="term" value="F:manganese ion binding"/>
    <property type="evidence" value="ECO:0007669"/>
    <property type="project" value="UniProtKB-UniRule"/>
</dbReference>
<dbReference type="GO" id="GO:0009098">
    <property type="term" value="P:L-leucine biosynthetic process"/>
    <property type="evidence" value="ECO:0007669"/>
    <property type="project" value="UniProtKB-UniRule"/>
</dbReference>
<dbReference type="CDD" id="cd07940">
    <property type="entry name" value="DRE_TIM_IPMS"/>
    <property type="match status" value="1"/>
</dbReference>
<dbReference type="FunFam" id="1.10.238.260:FF:000001">
    <property type="entry name" value="2-isopropylmalate synthase"/>
    <property type="match status" value="1"/>
</dbReference>
<dbReference type="FunFam" id="3.20.20.70:FF:000010">
    <property type="entry name" value="2-isopropylmalate synthase"/>
    <property type="match status" value="1"/>
</dbReference>
<dbReference type="FunFam" id="3.30.160.270:FF:000001">
    <property type="entry name" value="2-isopropylmalate synthase"/>
    <property type="match status" value="1"/>
</dbReference>
<dbReference type="Gene3D" id="1.10.238.260">
    <property type="match status" value="1"/>
</dbReference>
<dbReference type="Gene3D" id="3.30.160.270">
    <property type="match status" value="1"/>
</dbReference>
<dbReference type="Gene3D" id="3.20.20.70">
    <property type="entry name" value="Aldolase class I"/>
    <property type="match status" value="1"/>
</dbReference>
<dbReference type="HAMAP" id="MF_01025">
    <property type="entry name" value="LeuA_type1"/>
    <property type="match status" value="1"/>
</dbReference>
<dbReference type="InterPro" id="IPR050073">
    <property type="entry name" value="2-IPM_HCS-like"/>
</dbReference>
<dbReference type="InterPro" id="IPR013709">
    <property type="entry name" value="2-isopropylmalate_synth_dimer"/>
</dbReference>
<dbReference type="InterPro" id="IPR002034">
    <property type="entry name" value="AIPM/Hcit_synth_CS"/>
</dbReference>
<dbReference type="InterPro" id="IPR013785">
    <property type="entry name" value="Aldolase_TIM"/>
</dbReference>
<dbReference type="InterPro" id="IPR054691">
    <property type="entry name" value="LeuA/HCS_post-cat"/>
</dbReference>
<dbReference type="InterPro" id="IPR036230">
    <property type="entry name" value="LeuA_allosteric_dom_sf"/>
</dbReference>
<dbReference type="InterPro" id="IPR005671">
    <property type="entry name" value="LeuA_bact_synth"/>
</dbReference>
<dbReference type="InterPro" id="IPR000891">
    <property type="entry name" value="PYR_CT"/>
</dbReference>
<dbReference type="NCBIfam" id="TIGR00973">
    <property type="entry name" value="leuA_bact"/>
    <property type="match status" value="1"/>
</dbReference>
<dbReference type="NCBIfam" id="NF002084">
    <property type="entry name" value="PRK00915.1-1"/>
    <property type="match status" value="1"/>
</dbReference>
<dbReference type="NCBIfam" id="NF002086">
    <property type="entry name" value="PRK00915.1-3"/>
    <property type="match status" value="1"/>
</dbReference>
<dbReference type="PANTHER" id="PTHR10277:SF9">
    <property type="entry name" value="2-ISOPROPYLMALATE SYNTHASE 1, CHLOROPLASTIC-RELATED"/>
    <property type="match status" value="1"/>
</dbReference>
<dbReference type="PANTHER" id="PTHR10277">
    <property type="entry name" value="HOMOCITRATE SYNTHASE-RELATED"/>
    <property type="match status" value="1"/>
</dbReference>
<dbReference type="Pfam" id="PF22617">
    <property type="entry name" value="HCS_D2"/>
    <property type="match status" value="1"/>
</dbReference>
<dbReference type="Pfam" id="PF00682">
    <property type="entry name" value="HMGL-like"/>
    <property type="match status" value="1"/>
</dbReference>
<dbReference type="Pfam" id="PF08502">
    <property type="entry name" value="LeuA_dimer"/>
    <property type="match status" value="1"/>
</dbReference>
<dbReference type="SMART" id="SM00917">
    <property type="entry name" value="LeuA_dimer"/>
    <property type="match status" value="1"/>
</dbReference>
<dbReference type="SUPFAM" id="SSF110921">
    <property type="entry name" value="2-isopropylmalate synthase LeuA, allosteric (dimerisation) domain"/>
    <property type="match status" value="1"/>
</dbReference>
<dbReference type="SUPFAM" id="SSF51569">
    <property type="entry name" value="Aldolase"/>
    <property type="match status" value="1"/>
</dbReference>
<dbReference type="PROSITE" id="PS00815">
    <property type="entry name" value="AIPM_HOMOCIT_SYNTH_1"/>
    <property type="match status" value="1"/>
</dbReference>
<dbReference type="PROSITE" id="PS00816">
    <property type="entry name" value="AIPM_HOMOCIT_SYNTH_2"/>
    <property type="match status" value="1"/>
</dbReference>
<dbReference type="PROSITE" id="PS50991">
    <property type="entry name" value="PYR_CT"/>
    <property type="match status" value="1"/>
</dbReference>
<keyword id="KW-0028">Amino-acid biosynthesis</keyword>
<keyword id="KW-0100">Branched-chain amino acid biosynthesis</keyword>
<keyword id="KW-0963">Cytoplasm</keyword>
<keyword id="KW-0432">Leucine biosynthesis</keyword>
<keyword id="KW-0464">Manganese</keyword>
<keyword id="KW-0479">Metal-binding</keyword>
<keyword id="KW-0808">Transferase</keyword>
<sequence>MSQQVIIFDTTLRDGEQALQASLSVKEKLQIALALERMGVDVMEVGFPVSSPGDFESVQTIARQVKNSRVCALARCVEKDIDVAAESLKVAEAFRIHTFIATSPMHIATKLRSTLDEVIERAIYMVKRARNYTDDVEFSCEDAGRTPIADLARVVEAAINAGATTINIPDTVGYTMPFEFAGIISGLYERVPNIDKAIISVHTHDDLGLAVGNSLAAVHAGARQVEGAMNGIGERAGNCSLEEVIMAIKVRKDILNVHTAINHQEIWRTSQLVSQICNMPIPANKAIVGSGAFAHSSGIHQDGVLKNRENYEIMTPESIGLNQIQLNLTSRSGRAAVKHRMDEMGYKESEYNLDNLYDAFLKLADKKGQVFDYDLEALAFIGKQQEEPEHFRLDYFSVQSGSNDIATAAVKLACGEEVKAEAANGNGPVDAVYQAINRITDYNVELVKYSLTAKGHGKDALGQVDIVANYNGRRFHGVGLATDIVESSAKAMVHVLNNIWRATEVEKELQRKAQHNENNKETV</sequence>
<evidence type="ECO:0000255" key="1">
    <source>
        <dbReference type="HAMAP-Rule" id="MF_01025"/>
    </source>
</evidence>
<feature type="chain" id="PRO_1000149194" description="2-isopropylmalate synthase">
    <location>
        <begin position="1"/>
        <end position="523"/>
    </location>
</feature>
<feature type="domain" description="Pyruvate carboxyltransferase" evidence="1">
    <location>
        <begin position="5"/>
        <end position="267"/>
    </location>
</feature>
<feature type="region of interest" description="Regulatory domain" evidence="1">
    <location>
        <begin position="392"/>
        <end position="523"/>
    </location>
</feature>
<feature type="binding site" evidence="1">
    <location>
        <position position="14"/>
    </location>
    <ligand>
        <name>Mn(2+)</name>
        <dbReference type="ChEBI" id="CHEBI:29035"/>
    </ligand>
</feature>
<feature type="binding site" evidence="1">
    <location>
        <position position="202"/>
    </location>
    <ligand>
        <name>Mn(2+)</name>
        <dbReference type="ChEBI" id="CHEBI:29035"/>
    </ligand>
</feature>
<feature type="binding site" evidence="1">
    <location>
        <position position="204"/>
    </location>
    <ligand>
        <name>Mn(2+)</name>
        <dbReference type="ChEBI" id="CHEBI:29035"/>
    </ligand>
</feature>
<feature type="binding site" evidence="1">
    <location>
        <position position="238"/>
    </location>
    <ligand>
        <name>Mn(2+)</name>
        <dbReference type="ChEBI" id="CHEBI:29035"/>
    </ligand>
</feature>
<reference key="1">
    <citation type="journal article" date="2009" name="PLoS Genet.">
        <title>Organised genome dynamics in the Escherichia coli species results in highly diverse adaptive paths.</title>
        <authorList>
            <person name="Touchon M."/>
            <person name="Hoede C."/>
            <person name="Tenaillon O."/>
            <person name="Barbe V."/>
            <person name="Baeriswyl S."/>
            <person name="Bidet P."/>
            <person name="Bingen E."/>
            <person name="Bonacorsi S."/>
            <person name="Bouchier C."/>
            <person name="Bouvet O."/>
            <person name="Calteau A."/>
            <person name="Chiapello H."/>
            <person name="Clermont O."/>
            <person name="Cruveiller S."/>
            <person name="Danchin A."/>
            <person name="Diard M."/>
            <person name="Dossat C."/>
            <person name="Karoui M.E."/>
            <person name="Frapy E."/>
            <person name="Garry L."/>
            <person name="Ghigo J.M."/>
            <person name="Gilles A.M."/>
            <person name="Johnson J."/>
            <person name="Le Bouguenec C."/>
            <person name="Lescat M."/>
            <person name="Mangenot S."/>
            <person name="Martinez-Jehanne V."/>
            <person name="Matic I."/>
            <person name="Nassif X."/>
            <person name="Oztas S."/>
            <person name="Petit M.A."/>
            <person name="Pichon C."/>
            <person name="Rouy Z."/>
            <person name="Ruf C.S."/>
            <person name="Schneider D."/>
            <person name="Tourret J."/>
            <person name="Vacherie B."/>
            <person name="Vallenet D."/>
            <person name="Medigue C."/>
            <person name="Rocha E.P.C."/>
            <person name="Denamur E."/>
        </authorList>
    </citation>
    <scope>NUCLEOTIDE SEQUENCE [LARGE SCALE GENOMIC DNA]</scope>
    <source>
        <strain>UMN026 / ExPEC</strain>
    </source>
</reference>